<comment type="function">
    <text evidence="1">One of two assembly initiator proteins, it binds directly to the 5'-end of the 23S rRNA, where it nucleates assembly of the 50S subunit.</text>
</comment>
<comment type="function">
    <text evidence="1">One of the proteins that surrounds the polypeptide exit tunnel on the outside of the subunit.</text>
</comment>
<comment type="subunit">
    <text evidence="1">Part of the 50S ribosomal subunit.</text>
</comment>
<comment type="similarity">
    <text evidence="1">Belongs to the universal ribosomal protein uL24 family.</text>
</comment>
<keyword id="KW-1185">Reference proteome</keyword>
<keyword id="KW-0687">Ribonucleoprotein</keyword>
<keyword id="KW-0689">Ribosomal protein</keyword>
<keyword id="KW-0694">RNA-binding</keyword>
<keyword id="KW-0699">rRNA-binding</keyword>
<accession>Q63Q22</accession>
<proteinExistence type="inferred from homology"/>
<sequence>MNKIRKGDEVIVITGKDKGKRGVVLAVGAEHVTVEGINLVKKHVKPNPMKGTTGGVEAKTMPLHISNVALVDANGKASRVGIKVEDGKKVRFLKTTGAVLSA</sequence>
<protein>
    <recommendedName>
        <fullName evidence="1">Large ribosomal subunit protein uL24</fullName>
    </recommendedName>
    <alternativeName>
        <fullName evidence="2">50S ribosomal protein L24</fullName>
    </alternativeName>
</protein>
<evidence type="ECO:0000255" key="1">
    <source>
        <dbReference type="HAMAP-Rule" id="MF_01326"/>
    </source>
</evidence>
<evidence type="ECO:0000305" key="2"/>
<dbReference type="EMBL" id="BX571965">
    <property type="protein sequence ID" value="CAH37213.1"/>
    <property type="molecule type" value="Genomic_DNA"/>
</dbReference>
<dbReference type="RefSeq" id="WP_004197950.1">
    <property type="nucleotide sequence ID" value="NZ_CP009538.1"/>
</dbReference>
<dbReference type="RefSeq" id="YP_109796.1">
    <property type="nucleotide sequence ID" value="NC_006350.1"/>
</dbReference>
<dbReference type="SMR" id="Q63Q22"/>
<dbReference type="STRING" id="272560.BPSL3202"/>
<dbReference type="GeneID" id="93061821"/>
<dbReference type="KEGG" id="bps:BPSL3202"/>
<dbReference type="PATRIC" id="fig|272560.51.peg.2036"/>
<dbReference type="eggNOG" id="COG0198">
    <property type="taxonomic scope" value="Bacteria"/>
</dbReference>
<dbReference type="Proteomes" id="UP000000605">
    <property type="component" value="Chromosome 1"/>
</dbReference>
<dbReference type="GO" id="GO:1990904">
    <property type="term" value="C:ribonucleoprotein complex"/>
    <property type="evidence" value="ECO:0007669"/>
    <property type="project" value="UniProtKB-KW"/>
</dbReference>
<dbReference type="GO" id="GO:0005840">
    <property type="term" value="C:ribosome"/>
    <property type="evidence" value="ECO:0007669"/>
    <property type="project" value="UniProtKB-KW"/>
</dbReference>
<dbReference type="GO" id="GO:0019843">
    <property type="term" value="F:rRNA binding"/>
    <property type="evidence" value="ECO:0007669"/>
    <property type="project" value="UniProtKB-UniRule"/>
</dbReference>
<dbReference type="GO" id="GO:0003735">
    <property type="term" value="F:structural constituent of ribosome"/>
    <property type="evidence" value="ECO:0007669"/>
    <property type="project" value="InterPro"/>
</dbReference>
<dbReference type="GO" id="GO:0006412">
    <property type="term" value="P:translation"/>
    <property type="evidence" value="ECO:0007669"/>
    <property type="project" value="UniProtKB-UniRule"/>
</dbReference>
<dbReference type="CDD" id="cd06089">
    <property type="entry name" value="KOW_RPL26"/>
    <property type="match status" value="1"/>
</dbReference>
<dbReference type="Gene3D" id="2.30.30.30">
    <property type="match status" value="1"/>
</dbReference>
<dbReference type="HAMAP" id="MF_01326_B">
    <property type="entry name" value="Ribosomal_uL24_B"/>
    <property type="match status" value="1"/>
</dbReference>
<dbReference type="InterPro" id="IPR005824">
    <property type="entry name" value="KOW"/>
</dbReference>
<dbReference type="InterPro" id="IPR014722">
    <property type="entry name" value="Rib_uL2_dom2"/>
</dbReference>
<dbReference type="InterPro" id="IPR003256">
    <property type="entry name" value="Ribosomal_uL24"/>
</dbReference>
<dbReference type="InterPro" id="IPR005825">
    <property type="entry name" value="Ribosomal_uL24_CS"/>
</dbReference>
<dbReference type="InterPro" id="IPR041988">
    <property type="entry name" value="Ribosomal_uL24_KOW"/>
</dbReference>
<dbReference type="InterPro" id="IPR008991">
    <property type="entry name" value="Translation_prot_SH3-like_sf"/>
</dbReference>
<dbReference type="NCBIfam" id="TIGR01079">
    <property type="entry name" value="rplX_bact"/>
    <property type="match status" value="1"/>
</dbReference>
<dbReference type="PANTHER" id="PTHR12903">
    <property type="entry name" value="MITOCHONDRIAL RIBOSOMAL PROTEIN L24"/>
    <property type="match status" value="1"/>
</dbReference>
<dbReference type="Pfam" id="PF00467">
    <property type="entry name" value="KOW"/>
    <property type="match status" value="1"/>
</dbReference>
<dbReference type="Pfam" id="PF17136">
    <property type="entry name" value="ribosomal_L24"/>
    <property type="match status" value="1"/>
</dbReference>
<dbReference type="SUPFAM" id="SSF50104">
    <property type="entry name" value="Translation proteins SH3-like domain"/>
    <property type="match status" value="1"/>
</dbReference>
<dbReference type="PROSITE" id="PS01108">
    <property type="entry name" value="RIBOSOMAL_L24"/>
    <property type="match status" value="1"/>
</dbReference>
<feature type="chain" id="PRO_0000241577" description="Large ribosomal subunit protein uL24">
    <location>
        <begin position="1"/>
        <end position="102"/>
    </location>
</feature>
<organism>
    <name type="scientific">Burkholderia pseudomallei (strain K96243)</name>
    <dbReference type="NCBI Taxonomy" id="272560"/>
    <lineage>
        <taxon>Bacteria</taxon>
        <taxon>Pseudomonadati</taxon>
        <taxon>Pseudomonadota</taxon>
        <taxon>Betaproteobacteria</taxon>
        <taxon>Burkholderiales</taxon>
        <taxon>Burkholderiaceae</taxon>
        <taxon>Burkholderia</taxon>
        <taxon>pseudomallei group</taxon>
    </lineage>
</organism>
<reference key="1">
    <citation type="journal article" date="2004" name="Proc. Natl. Acad. Sci. U.S.A.">
        <title>Genomic plasticity of the causative agent of melioidosis, Burkholderia pseudomallei.</title>
        <authorList>
            <person name="Holden M.T.G."/>
            <person name="Titball R.W."/>
            <person name="Peacock S.J."/>
            <person name="Cerdeno-Tarraga A.-M."/>
            <person name="Atkins T."/>
            <person name="Crossman L.C."/>
            <person name="Pitt T."/>
            <person name="Churcher C."/>
            <person name="Mungall K.L."/>
            <person name="Bentley S.D."/>
            <person name="Sebaihia M."/>
            <person name="Thomson N.R."/>
            <person name="Bason N."/>
            <person name="Beacham I.R."/>
            <person name="Brooks K."/>
            <person name="Brown K.A."/>
            <person name="Brown N.F."/>
            <person name="Challis G.L."/>
            <person name="Cherevach I."/>
            <person name="Chillingworth T."/>
            <person name="Cronin A."/>
            <person name="Crossett B."/>
            <person name="Davis P."/>
            <person name="DeShazer D."/>
            <person name="Feltwell T."/>
            <person name="Fraser A."/>
            <person name="Hance Z."/>
            <person name="Hauser H."/>
            <person name="Holroyd S."/>
            <person name="Jagels K."/>
            <person name="Keith K.E."/>
            <person name="Maddison M."/>
            <person name="Moule S."/>
            <person name="Price C."/>
            <person name="Quail M.A."/>
            <person name="Rabbinowitsch E."/>
            <person name="Rutherford K."/>
            <person name="Sanders M."/>
            <person name="Simmonds M."/>
            <person name="Songsivilai S."/>
            <person name="Stevens K."/>
            <person name="Tumapa S."/>
            <person name="Vesaratchavest M."/>
            <person name="Whitehead S."/>
            <person name="Yeats C."/>
            <person name="Barrell B.G."/>
            <person name="Oyston P.C.F."/>
            <person name="Parkhill J."/>
        </authorList>
    </citation>
    <scope>NUCLEOTIDE SEQUENCE [LARGE SCALE GENOMIC DNA]</scope>
    <source>
        <strain>K96243</strain>
    </source>
</reference>
<name>RL24_BURPS</name>
<gene>
    <name evidence="1" type="primary">rplX</name>
    <name type="ordered locus">BPSL3202</name>
</gene>